<feature type="chain" id="PRO_0000280725" description="Mechanosensitive cation channel TMEM63A">
    <location>
        <begin position="1"/>
        <end position="807"/>
    </location>
</feature>
<feature type="topological domain" description="Extracellular" evidence="11 20 22 24">
    <location>
        <begin position="1"/>
        <end position="51"/>
    </location>
</feature>
<feature type="transmembrane region" description="Helical; Name=TM0" evidence="11 20 22 24">
    <location>
        <begin position="52"/>
        <end position="74"/>
    </location>
</feature>
<feature type="topological domain" description="Cytoplasmic" evidence="11 20 22 24">
    <location>
        <begin position="75"/>
        <end position="134"/>
    </location>
</feature>
<feature type="transmembrane region" description="Helical; Name=TM1" evidence="11 20 22 24">
    <location>
        <begin position="135"/>
        <end position="167"/>
    </location>
</feature>
<feature type="topological domain" description="Extracellular" evidence="11 20 22 24">
    <location>
        <begin position="168"/>
        <end position="191"/>
    </location>
</feature>
<feature type="transmembrane region" description="Helical; Name=TM2" evidence="11 20 22 24">
    <location>
        <begin position="192"/>
        <end position="217"/>
    </location>
</feature>
<feature type="topological domain" description="Cytoplasmic" evidence="11 20 22 24">
    <location>
        <begin position="218"/>
        <end position="416"/>
    </location>
</feature>
<feature type="transmembrane region" description="Helical; Name=TM3" evidence="11 20 22 24">
    <location>
        <begin position="417"/>
        <end position="444"/>
    </location>
</feature>
<feature type="topological domain" description="Extracellular" evidence="11 20 22 24">
    <location>
        <begin position="445"/>
        <end position="462"/>
    </location>
</feature>
<feature type="transmembrane region" description="Helical; Name=TM4" evidence="11 20 22 24">
    <location>
        <begin position="463"/>
        <end position="490"/>
    </location>
</feature>
<feature type="topological domain" description="Cytoplasmic" evidence="11 20 22 24">
    <location>
        <begin position="491"/>
        <end position="495"/>
    </location>
</feature>
<feature type="transmembrane region" description="Helical; Name=TM5" evidence="11 20 22 24">
    <location>
        <begin position="496"/>
        <end position="532"/>
    </location>
</feature>
<feature type="topological domain" description="Extracellular" evidence="11 20 22 24">
    <location>
        <begin position="533"/>
        <end position="554"/>
    </location>
</feature>
<feature type="transmembrane region" description="Helical; Name=TM6" evidence="11 20 22 24">
    <location>
        <begin position="555"/>
        <end position="586"/>
    </location>
</feature>
<feature type="topological domain" description="Cytoplasmic" evidence="11 20 22 24">
    <location>
        <begin position="587"/>
        <end position="606"/>
    </location>
</feature>
<feature type="transmembrane region" description="Helical; Name=TM7" evidence="11 20 22 24">
    <location>
        <begin position="607"/>
        <end position="624"/>
    </location>
</feature>
<feature type="topological domain" description="Extracellular" evidence="11 20 22 24">
    <location>
        <begin position="625"/>
        <end position="628"/>
    </location>
</feature>
<feature type="transmembrane region" description="Helical; Name=TM8" evidence="11 20 22 24">
    <location>
        <begin position="629"/>
        <end position="651"/>
    </location>
</feature>
<feature type="topological domain" description="Cytoplasmic" evidence="11 20 22 24">
    <location>
        <begin position="652"/>
        <end position="661"/>
    </location>
</feature>
<feature type="transmembrane region" description="Helical; Name=TM9" evidence="11 20 22 24">
    <location>
        <begin position="662"/>
        <end position="689"/>
    </location>
</feature>
<feature type="topological domain" description="Extracellular" evidence="11 20 22 24">
    <location>
        <begin position="690"/>
        <end position="694"/>
    </location>
</feature>
<feature type="transmembrane region" description="Helical; Name=TM10" evidence="11 20 22 24">
    <location>
        <begin position="695"/>
        <end position="709"/>
    </location>
</feature>
<feature type="topological domain" description="Cytoplasmic" evidence="11 20 22 24">
    <location>
        <begin position="710"/>
        <end position="807"/>
    </location>
</feature>
<feature type="region of interest" description="Intracellular linker IL2; confers mechanosensitivity" evidence="15">
    <location>
        <begin position="219"/>
        <end position="414"/>
    </location>
</feature>
<feature type="region of interest" description="Gating helix" evidence="15">
    <location>
        <begin position="555"/>
        <end position="586"/>
    </location>
</feature>
<feature type="modified residue" description="Phosphoserine" evidence="1">
    <location>
        <position position="739"/>
    </location>
</feature>
<feature type="glycosylation site" description="N-linked (GlcNAc...) asparagine" evidence="2">
    <location>
        <position position="38"/>
    </location>
</feature>
<feature type="glycosylation site" description="N-linked (GlcNAc...) asparagine" evidence="2">
    <location>
        <position position="450"/>
    </location>
</feature>
<feature type="sequence variant" id="VAR_090277" description="In HLD19; uncertain significance." evidence="12">
    <location>
        <begin position="74"/>
        <end position="807"/>
    </location>
</feature>
<feature type="sequence variant" id="VAR_061813" description="In dbSNP:rs57306966.">
    <original>F</original>
    <variation>I</variation>
    <location>
        <position position="121"/>
    </location>
</feature>
<feature type="sequence variant" id="VAR_083043" description="In HLD19; loss of mechanosensitive ion channel activity; dbSNP:rs1576101665." evidence="5">
    <original>G</original>
    <variation>E</variation>
    <location>
        <position position="168"/>
    </location>
</feature>
<feature type="sequence variant" id="VAR_083044" description="In HLD19; loss of mechanosensitive ion channel activity; dbSNP:rs1576080546." evidence="5">
    <original>I</original>
    <variation>N</variation>
    <location>
        <position position="462"/>
    </location>
</feature>
<feature type="sequence variant" id="VAR_090278" description="In HLD19; uncertain significance." evidence="13">
    <original>G</original>
    <variation>D</variation>
    <location>
        <position position="553"/>
    </location>
</feature>
<feature type="sequence variant" id="VAR_090279" description="In HLD19." evidence="7">
    <original>G</original>
    <variation>V</variation>
    <location>
        <position position="553"/>
    </location>
</feature>
<feature type="sequence variant" id="VAR_090280" description="In HLD19." evidence="6">
    <original>Y</original>
    <variation>H</variation>
    <location>
        <position position="559"/>
    </location>
</feature>
<feature type="sequence variant" id="VAR_083045" description="In HLD19; loss of mechanosensitive ion channel activity; dbSNP:rs1576074651." evidence="5">
    <original>G</original>
    <variation>S</variation>
    <location>
        <position position="567"/>
    </location>
</feature>
<feature type="sequence variant" id="VAR_031191" description="In dbSNP:rs1009668.">
    <original>V</original>
    <variation>M</variation>
    <location>
        <position position="622"/>
    </location>
</feature>
<feature type="mutagenesis site" description="Significant loss of mechanosensitive ion channel activity but no effect on its localization to the cell membrane." evidence="9">
    <original>E</original>
    <variation>K</variation>
    <location>
        <position position="571"/>
    </location>
</feature>
<feature type="sequence conflict" description="In Ref. 2; BAD96654/BAD96664." evidence="19" ref="2">
    <original>P</original>
    <variation>L</variation>
    <location>
        <position position="5"/>
    </location>
</feature>
<feature type="sequence conflict" description="In Ref. 1; BAA34512." evidence="19" ref="1">
    <original>L</original>
    <variation>F</variation>
    <location>
        <position position="206"/>
    </location>
</feature>
<feature type="sequence conflict" description="In Ref. 2; BAD96654/BAD96664." evidence="19" ref="2">
    <original>V</original>
    <variation>I</variation>
    <location>
        <position position="547"/>
    </location>
</feature>
<feature type="helix" evidence="25">
    <location>
        <begin position="13"/>
        <end position="19"/>
    </location>
</feature>
<feature type="helix" evidence="25">
    <location>
        <begin position="50"/>
        <end position="64"/>
    </location>
</feature>
<feature type="turn" evidence="25">
    <location>
        <begin position="65"/>
        <end position="71"/>
    </location>
</feature>
<feature type="strand" evidence="25">
    <location>
        <begin position="72"/>
        <end position="75"/>
    </location>
</feature>
<feature type="strand" evidence="25">
    <location>
        <begin position="78"/>
        <end position="84"/>
    </location>
</feature>
<feature type="helix" evidence="25">
    <location>
        <begin position="137"/>
        <end position="166"/>
    </location>
</feature>
<feature type="strand" evidence="25">
    <location>
        <begin position="173"/>
        <end position="176"/>
    </location>
</feature>
<feature type="strand" evidence="25">
    <location>
        <begin position="180"/>
        <end position="183"/>
    </location>
</feature>
<feature type="strand" evidence="25">
    <location>
        <begin position="187"/>
        <end position="189"/>
    </location>
</feature>
<feature type="helix" evidence="25">
    <location>
        <begin position="192"/>
        <end position="215"/>
    </location>
</feature>
<feature type="helix" evidence="25">
    <location>
        <begin position="248"/>
        <end position="251"/>
    </location>
</feature>
<feature type="helix" evidence="25">
    <location>
        <begin position="269"/>
        <end position="286"/>
    </location>
</feature>
<feature type="strand" evidence="25">
    <location>
        <begin position="290"/>
        <end position="292"/>
    </location>
</feature>
<feature type="helix" evidence="25">
    <location>
        <begin position="321"/>
        <end position="349"/>
    </location>
</feature>
<feature type="helix" evidence="25">
    <location>
        <begin position="364"/>
        <end position="371"/>
    </location>
</feature>
<feature type="helix" evidence="25">
    <location>
        <begin position="386"/>
        <end position="388"/>
    </location>
</feature>
<feature type="turn" evidence="25">
    <location>
        <begin position="402"/>
        <end position="405"/>
    </location>
</feature>
<feature type="helix" evidence="25">
    <location>
        <begin position="415"/>
        <end position="445"/>
    </location>
</feature>
<feature type="strand" evidence="25">
    <location>
        <begin position="446"/>
        <end position="450"/>
    </location>
</feature>
<feature type="helix" evidence="25">
    <location>
        <begin position="455"/>
        <end position="457"/>
    </location>
</feature>
<feature type="helix" evidence="25">
    <location>
        <begin position="461"/>
        <end position="463"/>
    </location>
</feature>
<feature type="helix" evidence="25">
    <location>
        <begin position="467"/>
        <end position="488"/>
    </location>
</feature>
<feature type="helix" evidence="25">
    <location>
        <begin position="495"/>
        <end position="533"/>
    </location>
</feature>
<feature type="strand" evidence="25">
    <location>
        <begin position="550"/>
        <end position="553"/>
    </location>
</feature>
<feature type="helix" evidence="25">
    <location>
        <begin position="554"/>
        <end position="573"/>
    </location>
</feature>
<feature type="helix" evidence="25">
    <location>
        <begin position="575"/>
        <end position="586"/>
    </location>
</feature>
<feature type="helix" evidence="25">
    <location>
        <begin position="591"/>
        <end position="598"/>
    </location>
</feature>
<feature type="helix" evidence="25">
    <location>
        <begin position="609"/>
        <end position="625"/>
    </location>
</feature>
<feature type="helix" evidence="25">
    <location>
        <begin position="629"/>
        <end position="631"/>
    </location>
</feature>
<feature type="helix" evidence="25">
    <location>
        <begin position="633"/>
        <end position="649"/>
    </location>
</feature>
<feature type="strand" evidence="25">
    <location>
        <begin position="652"/>
        <end position="655"/>
    </location>
</feature>
<feature type="helix" evidence="25">
    <location>
        <begin position="661"/>
        <end position="688"/>
    </location>
</feature>
<feature type="strand" evidence="25">
    <location>
        <begin position="692"/>
        <end position="694"/>
    </location>
</feature>
<feature type="helix" evidence="25">
    <location>
        <begin position="695"/>
        <end position="716"/>
    </location>
</feature>
<proteinExistence type="evidence at protein level"/>
<keyword id="KW-0002">3D-structure</keyword>
<keyword id="KW-0106">Calcium</keyword>
<keyword id="KW-1003">Cell membrane</keyword>
<keyword id="KW-0225">Disease variant</keyword>
<keyword id="KW-0967">Endosome</keyword>
<keyword id="KW-0325">Glycoprotein</keyword>
<keyword id="KW-0407">Ion channel</keyword>
<keyword id="KW-0406">Ion transport</keyword>
<keyword id="KW-1026">Leukodystrophy</keyword>
<keyword id="KW-0458">Lysosome</keyword>
<keyword id="KW-0472">Membrane</keyword>
<keyword id="KW-0597">Phosphoprotein</keyword>
<keyword id="KW-1267">Proteomics identification</keyword>
<keyword id="KW-1185">Reference proteome</keyword>
<keyword id="KW-0812">Transmembrane</keyword>
<keyword id="KW-1133">Transmembrane helix</keyword>
<keyword id="KW-0813">Transport</keyword>
<reference key="1">
    <citation type="journal article" date="1998" name="DNA Res.">
        <title>Prediction of the coding sequences of unidentified human genes. XI. The complete sequences of 100 new cDNA clones from brain which code for large proteins in vitro.</title>
        <authorList>
            <person name="Nagase T."/>
            <person name="Ishikawa K."/>
            <person name="Suyama M."/>
            <person name="Kikuno R."/>
            <person name="Miyajima N."/>
            <person name="Tanaka A."/>
            <person name="Kotani H."/>
            <person name="Nomura N."/>
            <person name="Ohara O."/>
        </authorList>
    </citation>
    <scope>NUCLEOTIDE SEQUENCE [LARGE SCALE MRNA]</scope>
    <source>
        <tissue>Brain</tissue>
    </source>
</reference>
<reference key="2">
    <citation type="submission" date="2005-04" db="EMBL/GenBank/DDBJ databases">
        <authorList>
            <person name="Suzuki Y."/>
            <person name="Sugano S."/>
            <person name="Totoki Y."/>
            <person name="Toyoda A."/>
            <person name="Takeda T."/>
            <person name="Sakaki Y."/>
            <person name="Tanaka A."/>
            <person name="Yokoyama S."/>
        </authorList>
    </citation>
    <scope>NUCLEOTIDE SEQUENCE [LARGE SCALE MRNA]</scope>
    <source>
        <tissue>Kidney</tissue>
    </source>
</reference>
<reference key="3">
    <citation type="journal article" date="2006" name="Nature">
        <title>The DNA sequence and biological annotation of human chromosome 1.</title>
        <authorList>
            <person name="Gregory S.G."/>
            <person name="Barlow K.F."/>
            <person name="McLay K.E."/>
            <person name="Kaul R."/>
            <person name="Swarbreck D."/>
            <person name="Dunham A."/>
            <person name="Scott C.E."/>
            <person name="Howe K.L."/>
            <person name="Woodfine K."/>
            <person name="Spencer C.C.A."/>
            <person name="Jones M.C."/>
            <person name="Gillson C."/>
            <person name="Searle S."/>
            <person name="Zhou Y."/>
            <person name="Kokocinski F."/>
            <person name="McDonald L."/>
            <person name="Evans R."/>
            <person name="Phillips K."/>
            <person name="Atkinson A."/>
            <person name="Cooper R."/>
            <person name="Jones C."/>
            <person name="Hall R.E."/>
            <person name="Andrews T.D."/>
            <person name="Lloyd C."/>
            <person name="Ainscough R."/>
            <person name="Almeida J.P."/>
            <person name="Ambrose K.D."/>
            <person name="Anderson F."/>
            <person name="Andrew R.W."/>
            <person name="Ashwell R.I.S."/>
            <person name="Aubin K."/>
            <person name="Babbage A.K."/>
            <person name="Bagguley C.L."/>
            <person name="Bailey J."/>
            <person name="Beasley H."/>
            <person name="Bethel G."/>
            <person name="Bird C.P."/>
            <person name="Bray-Allen S."/>
            <person name="Brown J.Y."/>
            <person name="Brown A.J."/>
            <person name="Buckley D."/>
            <person name="Burton J."/>
            <person name="Bye J."/>
            <person name="Carder C."/>
            <person name="Chapman J.C."/>
            <person name="Clark S.Y."/>
            <person name="Clarke G."/>
            <person name="Clee C."/>
            <person name="Cobley V."/>
            <person name="Collier R.E."/>
            <person name="Corby N."/>
            <person name="Coville G.J."/>
            <person name="Davies J."/>
            <person name="Deadman R."/>
            <person name="Dunn M."/>
            <person name="Earthrowl M."/>
            <person name="Ellington A.G."/>
            <person name="Errington H."/>
            <person name="Frankish A."/>
            <person name="Frankland J."/>
            <person name="French L."/>
            <person name="Garner P."/>
            <person name="Garnett J."/>
            <person name="Gay L."/>
            <person name="Ghori M.R.J."/>
            <person name="Gibson R."/>
            <person name="Gilby L.M."/>
            <person name="Gillett W."/>
            <person name="Glithero R.J."/>
            <person name="Grafham D.V."/>
            <person name="Griffiths C."/>
            <person name="Griffiths-Jones S."/>
            <person name="Grocock R."/>
            <person name="Hammond S."/>
            <person name="Harrison E.S.I."/>
            <person name="Hart E."/>
            <person name="Haugen E."/>
            <person name="Heath P.D."/>
            <person name="Holmes S."/>
            <person name="Holt K."/>
            <person name="Howden P.J."/>
            <person name="Hunt A.R."/>
            <person name="Hunt S.E."/>
            <person name="Hunter G."/>
            <person name="Isherwood J."/>
            <person name="James R."/>
            <person name="Johnson C."/>
            <person name="Johnson D."/>
            <person name="Joy A."/>
            <person name="Kay M."/>
            <person name="Kershaw J.K."/>
            <person name="Kibukawa M."/>
            <person name="Kimberley A.M."/>
            <person name="King A."/>
            <person name="Knights A.J."/>
            <person name="Lad H."/>
            <person name="Laird G."/>
            <person name="Lawlor S."/>
            <person name="Leongamornlert D.A."/>
            <person name="Lloyd D.M."/>
            <person name="Loveland J."/>
            <person name="Lovell J."/>
            <person name="Lush M.J."/>
            <person name="Lyne R."/>
            <person name="Martin S."/>
            <person name="Mashreghi-Mohammadi M."/>
            <person name="Matthews L."/>
            <person name="Matthews N.S.W."/>
            <person name="McLaren S."/>
            <person name="Milne S."/>
            <person name="Mistry S."/>
            <person name="Moore M.J.F."/>
            <person name="Nickerson T."/>
            <person name="O'Dell C.N."/>
            <person name="Oliver K."/>
            <person name="Palmeiri A."/>
            <person name="Palmer S.A."/>
            <person name="Parker A."/>
            <person name="Patel D."/>
            <person name="Pearce A.V."/>
            <person name="Peck A.I."/>
            <person name="Pelan S."/>
            <person name="Phelps K."/>
            <person name="Phillimore B.J."/>
            <person name="Plumb R."/>
            <person name="Rajan J."/>
            <person name="Raymond C."/>
            <person name="Rouse G."/>
            <person name="Saenphimmachak C."/>
            <person name="Sehra H.K."/>
            <person name="Sheridan E."/>
            <person name="Shownkeen R."/>
            <person name="Sims S."/>
            <person name="Skuce C.D."/>
            <person name="Smith M."/>
            <person name="Steward C."/>
            <person name="Subramanian S."/>
            <person name="Sycamore N."/>
            <person name="Tracey A."/>
            <person name="Tromans A."/>
            <person name="Van Helmond Z."/>
            <person name="Wall M."/>
            <person name="Wallis J.M."/>
            <person name="White S."/>
            <person name="Whitehead S.L."/>
            <person name="Wilkinson J.E."/>
            <person name="Willey D.L."/>
            <person name="Williams H."/>
            <person name="Wilming L."/>
            <person name="Wray P.W."/>
            <person name="Wu Z."/>
            <person name="Coulson A."/>
            <person name="Vaudin M."/>
            <person name="Sulston J.E."/>
            <person name="Durbin R.M."/>
            <person name="Hubbard T."/>
            <person name="Wooster R."/>
            <person name="Dunham I."/>
            <person name="Carter N.P."/>
            <person name="McVean G."/>
            <person name="Ross M.T."/>
            <person name="Harrow J."/>
            <person name="Olson M.V."/>
            <person name="Beck S."/>
            <person name="Rogers J."/>
            <person name="Bentley D.R."/>
        </authorList>
    </citation>
    <scope>NUCLEOTIDE SEQUENCE [LARGE SCALE GENOMIC DNA]</scope>
</reference>
<reference key="4">
    <citation type="journal article" date="2004" name="Genome Res.">
        <title>The status, quality, and expansion of the NIH full-length cDNA project: the Mammalian Gene Collection (MGC).</title>
        <authorList>
            <consortium name="The MGC Project Team"/>
        </authorList>
    </citation>
    <scope>NUCLEOTIDE SEQUENCE [LARGE SCALE MRNA]</scope>
    <source>
        <tissue>Blood</tissue>
    </source>
</reference>
<reference key="5">
    <citation type="journal article" date="2010" name="Proteomics">
        <title>The proteome of lysosomes.</title>
        <authorList>
            <person name="Schroeder B.A."/>
            <person name="Wrocklage C."/>
            <person name="Hasilik A."/>
            <person name="Saftig P."/>
        </authorList>
    </citation>
    <scope>REVIEW</scope>
    <scope>SUBCELLULAR LOCATION</scope>
</reference>
<reference key="6">
    <citation type="journal article" date="2014" name="J. Proteomics">
        <title>An enzyme assisted RP-RPLC approach for in-depth analysis of human liver phosphoproteome.</title>
        <authorList>
            <person name="Bian Y."/>
            <person name="Song C."/>
            <person name="Cheng K."/>
            <person name="Dong M."/>
            <person name="Wang F."/>
            <person name="Huang J."/>
            <person name="Sun D."/>
            <person name="Wang L."/>
            <person name="Ye M."/>
            <person name="Zou H."/>
        </authorList>
    </citation>
    <scope>IDENTIFICATION BY MASS SPECTROMETRY [LARGE SCALE ANALYSIS]</scope>
    <source>
        <tissue>Liver</tissue>
    </source>
</reference>
<reference key="7">
    <citation type="journal article" date="2018" name="Elife">
        <title>OSCA/TMEM63 are an Evolutionarily Conserved Family of Mechanically Activated Ion Channels.</title>
        <authorList>
            <person name="Murthy S.E."/>
            <person name="Dubin A.E."/>
            <person name="Whitwam T."/>
            <person name="Jojoa-Cruz S."/>
            <person name="Cahalan S.M."/>
            <person name="Mousavi S.A.R."/>
            <person name="Ward A.B."/>
            <person name="Patapoutian A."/>
        </authorList>
    </citation>
    <scope>FUNCTION</scope>
</reference>
<reference key="8">
    <citation type="journal article" date="2024" name="FEBS Lett.">
        <title>Membrane structure-responsive lipid scramblase activity of the TMEM63/OSCA family.</title>
        <authorList>
            <person name="Miyata Y."/>
            <person name="Nishimura M."/>
            <person name="Nagata A."/>
            <person name="Jing X."/>
            <person name="Sultan C.S."/>
            <person name="Kuribayashi R."/>
            <person name="Takahashi K."/>
            <person name="Lee Y."/>
            <person name="Nishizawa T."/>
            <person name="Segawa K."/>
        </authorList>
    </citation>
    <scope>FUNCTION</scope>
    <scope>SUBCELLULAR LOCATION</scope>
</reference>
<reference key="9">
    <citation type="journal article" date="2024" name="J. Clin. Invest.">
        <title>Mechanosensitive channels TMEM63A and TMEM63B mediate lung inflation-induced surfactant secretion.</title>
        <authorList>
            <person name="Chen G.L."/>
            <person name="Li J.Y."/>
            <person name="Chen X."/>
            <person name="Liu J.W."/>
            <person name="Zhang Q."/>
            <person name="Liu J.Y."/>
            <person name="Wen J."/>
            <person name="Wang N."/>
            <person name="Lei M."/>
            <person name="Wei J.P."/>
            <person name="Yi L."/>
            <person name="Li J.J."/>
            <person name="Ling Y.P."/>
            <person name="Yi H.Q."/>
            <person name="Hu Z."/>
            <person name="Duan J."/>
            <person name="Zhang J."/>
            <person name="Zeng B."/>
        </authorList>
    </citation>
    <scope>FUNCTION</scope>
    <scope>SUBCELLULAR LOCATION</scope>
</reference>
<reference evidence="23" key="10">
    <citation type="journal article" date="2023" name="Nat. Commun.">
        <title>A mechanical-coupling mechanism in OSCA/TMEM63 channel mechanosensitivity.</title>
        <authorList>
            <person name="Zhang M."/>
            <person name="Shan Y."/>
            <person name="Cox C.D."/>
            <person name="Pei D."/>
        </authorList>
    </citation>
    <scope>STRUCTURE BY ELECTRON MICROSCOPY (3.30 ANGSTROMS)</scope>
    <scope>SUBUNIT</scope>
</reference>
<reference key="11">
    <citation type="journal article" date="2023" name="Neuron">
        <title>TMEM63 proteins function as monomeric high-threshold mechanosensitive ion channels.</title>
        <authorList>
            <person name="Zheng W."/>
            <person name="Rawson S."/>
            <person name="Shen Z."/>
            <person name="Tamilselvan E."/>
            <person name="Smith H.E."/>
            <person name="Halford J."/>
            <person name="Shen C."/>
            <person name="Murthy S.E."/>
            <person name="Ulbrich M.H."/>
            <person name="Sotomayor M."/>
            <person name="Fu T.M."/>
            <person name="Holt J.R."/>
        </authorList>
    </citation>
    <scope>STRUCTURE BY ELECTRON MICROSCOPY (3.80 ANGSTROMS)</scope>
    <scope>FUNCTION</scope>
    <scope>SUBUNIT</scope>
    <scope>SUBCELLULAR LOCATION</scope>
    <scope>GLYCOSYLATION</scope>
    <scope>TOPOLOGY</scope>
    <scope>MUTAGENESIS OF GLU-571</scope>
</reference>
<reference evidence="24" key="12">
    <citation type="journal article" date="2024" name="Proteins">
        <title>A monomeric structure of human TMEM63A protein.</title>
        <authorList>
            <person name="Wu X."/>
            <person name="Shang T."/>
            <person name="Lu X."/>
            <person name="Luo D."/>
            <person name="Yang D."/>
        </authorList>
    </citation>
    <scope>STRUCTURE BY ELECTRON MICROSCOPY (3.60 ANGSTROMS) OF 6-719</scope>
    <scope>SUBUNIT</scope>
</reference>
<reference key="13">
    <citation type="journal article" date="2019" name="Am. J. Hum. Genet.">
        <title>Heterozygous Variants in the Mechanosensitive Ion Channel TMEM63A Result in Transient Hypomyelination during Infancy.</title>
        <authorList>
            <person name="Yan H."/>
            <person name="Helman G."/>
            <person name="Murthy S.E."/>
            <person name="Ji H."/>
            <person name="Crawford J."/>
            <person name="Kubisiak T."/>
            <person name="Bent S.J."/>
            <person name="Xiao J."/>
            <person name="Taft R.J."/>
            <person name="Coombs A."/>
            <person name="Wu Y."/>
            <person name="Pop A."/>
            <person name="Li D."/>
            <person name="de Vries L.S."/>
            <person name="Jiang Y."/>
            <person name="Salomons G.S."/>
            <person name="van der Knaap M.S."/>
            <person name="Patapoutian A."/>
            <person name="Simons C."/>
            <person name="Burmeister M."/>
            <person name="Wang J."/>
            <person name="Wolf N.I."/>
        </authorList>
    </citation>
    <scope>VARIANTS HLD19 GLU-168; ASN-462 AND SER-567</scope>
    <scope>CHARACTERIZATION OF VARIANTS HLD19 GLU-168; ASN-462 AND SER-567</scope>
    <scope>FUNCTION</scope>
</reference>
<reference key="14">
    <citation type="journal article" date="2021" name="J. Hum. Genet.">
        <title>Spinal cord involvement and paroxysmal events in 'Infantile Onset Transient Hypomyelination' due to TMEM63A mutation.</title>
        <authorList>
            <person name="Tonduti D."/>
            <person name="Mura E."/>
            <person name="Masnada S."/>
            <person name="Bertini E."/>
            <person name="Aiello C."/>
            <person name="Zini D."/>
            <person name="Parmeggiani L."/>
            <person name="Cantalupo G."/>
            <person name="Talenti G."/>
            <person name="Veggiotti P."/>
            <person name="Spaccini L."/>
            <person name="Iascone M."/>
            <person name="Parazzini C."/>
        </authorList>
    </citation>
    <scope>VARIANT HLD19 HIS-559</scope>
</reference>
<reference key="15">
    <citation type="journal article" date="2022" name="Brain Dev.">
        <title>A novel de novo TMEM63A variant in a patient with severe hypomyelination and global developmental delay.</title>
        <authorList>
            <person name="Fukumura S."/>
            <person name="Hiraide T."/>
            <person name="Yamamoto A."/>
            <person name="Tsuchida K."/>
            <person name="Aoto K."/>
            <person name="Nakashima M."/>
            <person name="Saitsu H."/>
        </authorList>
    </citation>
    <scope>VARIANT HLD19 VAL-553</scope>
</reference>
<reference key="16">
    <citation type="journal article" date="2024" name="Genes (Basel)">
        <title>A TMEM63A Nonsense Heterozygous Variant Linked to Infantile Transient Hypomyelinating Leukodystrophy Type 19?</title>
        <authorList>
            <person name="Siori D."/>
            <person name="Vlachakis D."/>
            <person name="Makrythanasis P."/>
            <person name="Traeger-Synodinos J."/>
            <person name="Veltra D."/>
            <person name="Kampouraki A."/>
            <person name="Chrousos G.P."/>
        </authorList>
    </citation>
    <scope>VARIANT HLD19 74-ARG--ALA-807 DEL</scope>
</reference>
<reference key="17">
    <citation type="journal article" date="2024" name="J. Hum. Genet.">
        <title>A novel heterozygous TMEM63A variant in a familial case with early onset nystagmus, severe hypomyelination, and a favorable adult prognosis.</title>
        <authorList>
            <person name="Yoneno S."/>
            <person name="Yamamoto K."/>
            <person name="Tabata K."/>
            <person name="Shimizu-Motohashi Y."/>
            <person name="Tomita A."/>
            <person name="Hayashi T."/>
            <person name="Maki H."/>
            <person name="Sato N."/>
            <person name="Inoue K."/>
            <person name="Saitsu H."/>
            <person name="Komaki H."/>
        </authorList>
    </citation>
    <scope>VARIANT HLD19 ASP-553</scope>
</reference>
<accession>O94886</accession>
<accession>Q53GI7</accession>
<accession>Q5TE96</accession>
<accession>Q8N2U2</accession>
<sequence length="807" mass="92126">MMDSPFLELWQSKAVSIREQLGLGDRPNDSYCYNSAKNSTVLQGVTFGGIPTVLLIDVSCFLFLILVFSIIRRRFWDYGRIALVSEADSESRFQRLSSTSSSGQQDFENELGCCPWLTAIFRLHDDQILEWCGEDAIHYLSFQRHIIFLLVVVSFLSLCVILPVNLSGDLLDKDPYSFGRTTIANLQTDNDLLWLHTIFAVIYLFLTVGFMRHHTQSIKYKEENLVRRTLFITGLPRDARKETVESHFRDAYPTCEVVDVQLCYNVAKLIYLCKEKKKTEKSLTYYTNLQVKTGQRTLINPKPCGQFCCCEVLGCEWEDAISYYTRMKDRLLERITEEERHVQDQPLGMAFVTFQEKSMATYILKDFNACKCQSLQCKGEPQPSSHSRELYTSKWTVTFAADPEDICWKNLSIQGLRWWLQWLGINFTLFLGLFFLTTPSIILSTMDKFNVTKPIHALNNPIISQFFPTLLLWSFSALLPSIVYYSTLLESHWTKSGENQIMMTKVYIFLIFMVLILPSLGLTSLDFFFRWLFDKTSSEASIRLECVFLPDQGAFFVNYVIASAFIGNGMELLRLPGLILYTFRMIMAKTAADRRNVKQNQAFQYEFGAMYAWMLCVFTVIVAYSITCPIIAPFGLIYILLKHMVDRHNLYFVYLPAKLEKGIHFAAVNQALAAPILCLFWLYFFSFLRLGMKAPATLFTFLVLLLTILVCLAHTCFGCFKHLSPLNYKTEEPASDKGSEAEAHMPPPFTPYVPRILNGLASERTALSPQQQQQQTYGAIHNISGTIPGQCLAQSATGSVAAAPQEA</sequence>
<name>TM63A_HUMAN</name>
<protein>
    <recommendedName>
        <fullName evidence="19">Mechanosensitive cation channel TMEM63A</fullName>
    </recommendedName>
    <alternativeName>
        <fullName evidence="17">Transmembrane protein 63A</fullName>
        <shortName evidence="17">hTMEM63A</shortName>
    </alternativeName>
</protein>
<gene>
    <name evidence="16 21" type="primary">TMEM63A</name>
    <name type="synonym">KIAA0489</name>
    <name evidence="18" type="synonym">KIAA0792</name>
</gene>
<organism>
    <name type="scientific">Homo sapiens</name>
    <name type="common">Human</name>
    <dbReference type="NCBI Taxonomy" id="9606"/>
    <lineage>
        <taxon>Eukaryota</taxon>
        <taxon>Metazoa</taxon>
        <taxon>Chordata</taxon>
        <taxon>Craniata</taxon>
        <taxon>Vertebrata</taxon>
        <taxon>Euteleostomi</taxon>
        <taxon>Mammalia</taxon>
        <taxon>Eutheria</taxon>
        <taxon>Euarchontoglires</taxon>
        <taxon>Primates</taxon>
        <taxon>Haplorrhini</taxon>
        <taxon>Catarrhini</taxon>
        <taxon>Hominidae</taxon>
        <taxon>Homo</taxon>
    </lineage>
</organism>
<comment type="function">
    <text evidence="1 4 5 9 10 14">Mechanosensitive cation channel with low conductance and high activation threshold (PubMed:30382938, PubMed:31587869, PubMed:37543036). In contrast to TMEM63B, does not show phospholipid scramblase activity (PubMed:39716028). Acts as a regulator of lysosomal morphology by mediating lysosomal mechanosensitivity (By similarity). Important for the baby's first breath and respiration throughout life (PubMed:38127458). Upon lung inflation conducts cation currents in alveolar type 1 and 2 cells triggering lamellar body exocytosis and surfactant secretion into airspace (PubMed:38127458). Also acts as an osmosensitive cation channel preferentially activated by hypotonic stress (By similarity).</text>
</comment>
<comment type="catalytic activity">
    <reaction evidence="1">
        <text>Ca(2+)(in) = Ca(2+)(out)</text>
        <dbReference type="Rhea" id="RHEA:29671"/>
        <dbReference type="ChEBI" id="CHEBI:29108"/>
    </reaction>
</comment>
<comment type="subunit">
    <text evidence="8 9 11">Monomer.</text>
</comment>
<comment type="subcellular location">
    <subcellularLocation>
        <location evidence="3 10 14">Lysosome membrane</location>
        <topology evidence="11">Multi-pass membrane protein</topology>
    </subcellularLocation>
    <subcellularLocation>
        <location evidence="10">Early endosome membrane</location>
        <topology evidence="11">Multi-pass membrane protein</topology>
    </subcellularLocation>
    <subcellularLocation>
        <location evidence="9">Cell membrane</location>
        <topology evidence="11">Multi-pass membrane protein</topology>
    </subcellularLocation>
</comment>
<comment type="PTM">
    <text evidence="9">N-Glycosylated.</text>
</comment>
<comment type="disease" evidence="5 6 7 12 13">
    <disease id="DI-05713">
        <name>Leukodystrophy, hypomyelinating, 19, transient infantile</name>
        <acronym>HLD19</acronym>
        <description>An autosomal dominant disorder characterized by marked hypomyelination on brain imaging, congenital nystagmus, and motor delay manifesting in early infancy. Both neurologic impairment and abnormal brain imaging spontaneously resolve during childhood.</description>
        <dbReference type="MIM" id="618688"/>
    </disease>
    <text>The disease is caused by variants affecting the gene represented in this entry.</text>
</comment>
<comment type="similarity">
    <text evidence="19">Belongs to the CSC1 (TC 1.A.17) family.</text>
</comment>
<comment type="sequence caution" evidence="19">
    <conflict type="erroneous initiation">
        <sequence resource="EMBL-CDS" id="BAA34512"/>
    </conflict>
    <text>Extended N-terminus.</text>
</comment>
<comment type="sequence caution" evidence="19">
    <conflict type="erroneous initiation">
        <sequence resource="EMBL-CDS" id="BAD96654"/>
    </conflict>
    <text>Extended N-terminus.</text>
</comment>
<comment type="sequence caution" evidence="19">
    <conflict type="erroneous initiation">
        <sequence resource="EMBL-CDS" id="BAD96664"/>
    </conflict>
    <text>Extended N-terminus.</text>
</comment>
<evidence type="ECO:0000250" key="1">
    <source>
        <dbReference type="UniProtKB" id="Q91YT8"/>
    </source>
</evidence>
<evidence type="ECO:0000255" key="2">
    <source>
        <dbReference type="PROSITE-ProRule" id="PRU00498"/>
    </source>
</evidence>
<evidence type="ECO:0000269" key="3">
    <source>
    </source>
</evidence>
<evidence type="ECO:0000269" key="4">
    <source>
    </source>
</evidence>
<evidence type="ECO:0000269" key="5">
    <source>
    </source>
</evidence>
<evidence type="ECO:0000269" key="6">
    <source>
    </source>
</evidence>
<evidence type="ECO:0000269" key="7">
    <source>
    </source>
</evidence>
<evidence type="ECO:0000269" key="8">
    <source>
    </source>
</evidence>
<evidence type="ECO:0000269" key="9">
    <source>
    </source>
</evidence>
<evidence type="ECO:0000269" key="10">
    <source>
    </source>
</evidence>
<evidence type="ECO:0000269" key="11">
    <source>
    </source>
</evidence>
<evidence type="ECO:0000269" key="12">
    <source>
    </source>
</evidence>
<evidence type="ECO:0000269" key="13">
    <source>
    </source>
</evidence>
<evidence type="ECO:0000269" key="14">
    <source>
    </source>
</evidence>
<evidence type="ECO:0000303" key="15">
    <source>
    </source>
</evidence>
<evidence type="ECO:0000303" key="16">
    <source>
    </source>
</evidence>
<evidence type="ECO:0000303" key="17">
    <source>
    </source>
</evidence>
<evidence type="ECO:0000303" key="18">
    <source>
    </source>
</evidence>
<evidence type="ECO:0000305" key="19"/>
<evidence type="ECO:0000305" key="20">
    <source>
    </source>
</evidence>
<evidence type="ECO:0000312" key="21">
    <source>
        <dbReference type="HGNC" id="HGNC:29118"/>
    </source>
</evidence>
<evidence type="ECO:0007744" key="22">
    <source>
        <dbReference type="PDB" id="8EHW"/>
    </source>
</evidence>
<evidence type="ECO:0007744" key="23">
    <source>
        <dbReference type="PDB" id="8GRS"/>
    </source>
</evidence>
<evidence type="ECO:0007744" key="24">
    <source>
        <dbReference type="PDB" id="8WUA"/>
    </source>
</evidence>
<evidence type="ECO:0007829" key="25">
    <source>
        <dbReference type="PDB" id="8GRS"/>
    </source>
</evidence>
<dbReference type="EMBL" id="AB018335">
    <property type="protein sequence ID" value="BAA34512.2"/>
    <property type="status" value="ALT_INIT"/>
    <property type="molecule type" value="mRNA"/>
</dbReference>
<dbReference type="EMBL" id="AK222944">
    <property type="protein sequence ID" value="BAD96664.1"/>
    <property type="status" value="ALT_INIT"/>
    <property type="molecule type" value="mRNA"/>
</dbReference>
<dbReference type="EMBL" id="AK222934">
    <property type="protein sequence ID" value="BAD96654.1"/>
    <property type="status" value="ALT_INIT"/>
    <property type="molecule type" value="mRNA"/>
</dbReference>
<dbReference type="EMBL" id="AL117348">
    <property type="status" value="NOT_ANNOTATED_CDS"/>
    <property type="molecule type" value="Genomic_DNA"/>
</dbReference>
<dbReference type="EMBL" id="AL591895">
    <property type="status" value="NOT_ANNOTATED_CDS"/>
    <property type="molecule type" value="Genomic_DNA"/>
</dbReference>
<dbReference type="EMBL" id="BC030245">
    <property type="protein sequence ID" value="AAH30245.1"/>
    <property type="molecule type" value="mRNA"/>
</dbReference>
<dbReference type="CCDS" id="CCDS31042.1"/>
<dbReference type="RefSeq" id="NP_055513.2">
    <property type="nucleotide sequence ID" value="NM_014698.3"/>
</dbReference>
<dbReference type="RefSeq" id="XP_011542630.1">
    <property type="nucleotide sequence ID" value="XM_011544328.2"/>
</dbReference>
<dbReference type="RefSeq" id="XP_011542631.1">
    <property type="nucleotide sequence ID" value="XM_011544329.2"/>
</dbReference>
<dbReference type="RefSeq" id="XP_011542632.1">
    <property type="nucleotide sequence ID" value="XM_011544330.4"/>
</dbReference>
<dbReference type="RefSeq" id="XP_054195741.1">
    <property type="nucleotide sequence ID" value="XM_054339766.1"/>
</dbReference>
<dbReference type="PDB" id="8EHW">
    <property type="method" value="EM"/>
    <property type="resolution" value="3.80 A"/>
    <property type="chains" value="A=1-807"/>
</dbReference>
<dbReference type="PDB" id="8GRS">
    <property type="method" value="EM"/>
    <property type="resolution" value="3.30 A"/>
    <property type="chains" value="A=1-807"/>
</dbReference>
<dbReference type="PDB" id="8WUA">
    <property type="method" value="EM"/>
    <property type="resolution" value="3.60 A"/>
    <property type="chains" value="A=6-719"/>
</dbReference>
<dbReference type="PDBsum" id="8EHW"/>
<dbReference type="PDBsum" id="8GRS"/>
<dbReference type="PDBsum" id="8WUA"/>
<dbReference type="EMDB" id="EMD-28153"/>
<dbReference type="EMDB" id="EMD-34214"/>
<dbReference type="EMDB" id="EMD-37852"/>
<dbReference type="SMR" id="O94886"/>
<dbReference type="BioGRID" id="115074">
    <property type="interactions" value="108"/>
</dbReference>
<dbReference type="FunCoup" id="O94886">
    <property type="interactions" value="432"/>
</dbReference>
<dbReference type="IntAct" id="O94886">
    <property type="interactions" value="94"/>
</dbReference>
<dbReference type="MINT" id="O94886"/>
<dbReference type="STRING" id="9606.ENSP00000355800"/>
<dbReference type="TCDB" id="1.A.17.5.21">
    <property type="family name" value="the calcium-dependent chloride channel (ca-clc) family"/>
</dbReference>
<dbReference type="GlyGen" id="O94886">
    <property type="glycosylation" value="4 sites, 4 N-linked glycans (1 site), 1 O-linked glycan (1 site)"/>
</dbReference>
<dbReference type="iPTMnet" id="O94886"/>
<dbReference type="PhosphoSitePlus" id="O94886"/>
<dbReference type="SwissPalm" id="O94886"/>
<dbReference type="BioMuta" id="TMEM63A"/>
<dbReference type="jPOST" id="O94886"/>
<dbReference type="MassIVE" id="O94886"/>
<dbReference type="PaxDb" id="9606-ENSP00000355800"/>
<dbReference type="PeptideAtlas" id="O94886"/>
<dbReference type="ProteomicsDB" id="50523"/>
<dbReference type="Pumba" id="O94886"/>
<dbReference type="Antibodypedia" id="34647">
    <property type="antibodies" value="70 antibodies from 15 providers"/>
</dbReference>
<dbReference type="DNASU" id="9725"/>
<dbReference type="Ensembl" id="ENST00000366835.8">
    <property type="protein sequence ID" value="ENSP00000355800.3"/>
    <property type="gene ID" value="ENSG00000196187.12"/>
</dbReference>
<dbReference type="GeneID" id="9725"/>
<dbReference type="KEGG" id="hsa:9725"/>
<dbReference type="MANE-Select" id="ENST00000366835.8">
    <property type="protein sequence ID" value="ENSP00000355800.3"/>
    <property type="RefSeq nucleotide sequence ID" value="NM_014698.3"/>
    <property type="RefSeq protein sequence ID" value="NP_055513.2"/>
</dbReference>
<dbReference type="UCSC" id="uc001hpm.3">
    <property type="organism name" value="human"/>
</dbReference>
<dbReference type="AGR" id="HGNC:29118"/>
<dbReference type="CTD" id="9725"/>
<dbReference type="DisGeNET" id="9725"/>
<dbReference type="GeneCards" id="TMEM63A"/>
<dbReference type="HGNC" id="HGNC:29118">
    <property type="gene designation" value="TMEM63A"/>
</dbReference>
<dbReference type="HPA" id="ENSG00000196187">
    <property type="expression patterns" value="Tissue enhanced (brain)"/>
</dbReference>
<dbReference type="MalaCards" id="TMEM63A"/>
<dbReference type="MIM" id="618685">
    <property type="type" value="gene"/>
</dbReference>
<dbReference type="MIM" id="618688">
    <property type="type" value="phenotype"/>
</dbReference>
<dbReference type="neXtProt" id="NX_O94886"/>
<dbReference type="OpenTargets" id="ENSG00000196187"/>
<dbReference type="PharmGKB" id="PA142670776"/>
<dbReference type="VEuPathDB" id="HostDB:ENSG00000196187"/>
<dbReference type="eggNOG" id="KOG1134">
    <property type="taxonomic scope" value="Eukaryota"/>
</dbReference>
<dbReference type="GeneTree" id="ENSGT00940000159576"/>
<dbReference type="HOGENOM" id="CLU_015647_2_0_1"/>
<dbReference type="InParanoid" id="O94886"/>
<dbReference type="OMA" id="DPTQVIW"/>
<dbReference type="OrthoDB" id="1689567at2759"/>
<dbReference type="PAN-GO" id="O94886">
    <property type="GO annotations" value="2 GO annotations based on evolutionary models"/>
</dbReference>
<dbReference type="PhylomeDB" id="O94886"/>
<dbReference type="TreeFam" id="TF324300"/>
<dbReference type="PathwayCommons" id="O94886"/>
<dbReference type="Reactome" id="R-HSA-6798695">
    <property type="pathway name" value="Neutrophil degranulation"/>
</dbReference>
<dbReference type="SignaLink" id="O94886"/>
<dbReference type="BioGRID-ORCS" id="9725">
    <property type="hits" value="13 hits in 1162 CRISPR screens"/>
</dbReference>
<dbReference type="ChiTaRS" id="TMEM63A">
    <property type="organism name" value="human"/>
</dbReference>
<dbReference type="GeneWiki" id="TMEM63A"/>
<dbReference type="GenomeRNAi" id="9725"/>
<dbReference type="Pharos" id="O94886">
    <property type="development level" value="Tbio"/>
</dbReference>
<dbReference type="PRO" id="PR:O94886"/>
<dbReference type="Proteomes" id="UP000005640">
    <property type="component" value="Chromosome 1"/>
</dbReference>
<dbReference type="RNAct" id="O94886">
    <property type="molecule type" value="protein"/>
</dbReference>
<dbReference type="Bgee" id="ENSG00000196187">
    <property type="expression patterns" value="Expressed in C1 segment of cervical spinal cord and 194 other cell types or tissues"/>
</dbReference>
<dbReference type="ExpressionAtlas" id="O94886">
    <property type="expression patterns" value="baseline and differential"/>
</dbReference>
<dbReference type="GO" id="GO:0034451">
    <property type="term" value="C:centriolar satellite"/>
    <property type="evidence" value="ECO:0000314"/>
    <property type="project" value="HPA"/>
</dbReference>
<dbReference type="GO" id="GO:0031901">
    <property type="term" value="C:early endosome membrane"/>
    <property type="evidence" value="ECO:0000314"/>
    <property type="project" value="UniProtKB"/>
</dbReference>
<dbReference type="GO" id="GO:0070062">
    <property type="term" value="C:extracellular exosome"/>
    <property type="evidence" value="ECO:0007005"/>
    <property type="project" value="UniProtKB"/>
</dbReference>
<dbReference type="GO" id="GO:0043231">
    <property type="term" value="C:intracellular membrane-bounded organelle"/>
    <property type="evidence" value="ECO:0000314"/>
    <property type="project" value="HPA"/>
</dbReference>
<dbReference type="GO" id="GO:0005765">
    <property type="term" value="C:lysosomal membrane"/>
    <property type="evidence" value="ECO:0000314"/>
    <property type="project" value="UniProtKB"/>
</dbReference>
<dbReference type="GO" id="GO:0005886">
    <property type="term" value="C:plasma membrane"/>
    <property type="evidence" value="ECO:0000314"/>
    <property type="project" value="UniProtKB"/>
</dbReference>
<dbReference type="GO" id="GO:0035579">
    <property type="term" value="C:specific granule membrane"/>
    <property type="evidence" value="ECO:0000304"/>
    <property type="project" value="Reactome"/>
</dbReference>
<dbReference type="GO" id="GO:0070821">
    <property type="term" value="C:tertiary granule membrane"/>
    <property type="evidence" value="ECO:0000304"/>
    <property type="project" value="Reactome"/>
</dbReference>
<dbReference type="GO" id="GO:0005227">
    <property type="term" value="F:calcium-activated cation channel activity"/>
    <property type="evidence" value="ECO:0000318"/>
    <property type="project" value="GO_Central"/>
</dbReference>
<dbReference type="GO" id="GO:0008381">
    <property type="term" value="F:mechanosensitive monoatomic ion channel activity"/>
    <property type="evidence" value="ECO:0000314"/>
    <property type="project" value="UniProtKB"/>
</dbReference>
<dbReference type="GO" id="GO:0003676">
    <property type="term" value="F:nucleic acid binding"/>
    <property type="evidence" value="ECO:0007669"/>
    <property type="project" value="InterPro"/>
</dbReference>
<dbReference type="GO" id="GO:1990760">
    <property type="term" value="F:osmolarity-sensing monoatomic cation channel activity"/>
    <property type="evidence" value="ECO:0000250"/>
    <property type="project" value="UniProtKB"/>
</dbReference>
<dbReference type="GO" id="GO:0007040">
    <property type="term" value="P:lysosome organization"/>
    <property type="evidence" value="ECO:0000250"/>
    <property type="project" value="UniProtKB"/>
</dbReference>
<dbReference type="GO" id="GO:0160069">
    <property type="term" value="P:surfactant secretion"/>
    <property type="evidence" value="ECO:0000250"/>
    <property type="project" value="UniProtKB"/>
</dbReference>
<dbReference type="Gene3D" id="3.30.70.330">
    <property type="match status" value="1"/>
</dbReference>
<dbReference type="InterPro" id="IPR045122">
    <property type="entry name" value="Csc1-like"/>
</dbReference>
<dbReference type="InterPro" id="IPR003864">
    <property type="entry name" value="CSC1/OSCA1-like_7TM"/>
</dbReference>
<dbReference type="InterPro" id="IPR027815">
    <property type="entry name" value="CSC1/OSCA1-like_cyt"/>
</dbReference>
<dbReference type="InterPro" id="IPR032880">
    <property type="entry name" value="Csc1/OSCA1-like_N"/>
</dbReference>
<dbReference type="InterPro" id="IPR012677">
    <property type="entry name" value="Nucleotide-bd_a/b_plait_sf"/>
</dbReference>
<dbReference type="InterPro" id="IPR035979">
    <property type="entry name" value="RBD_domain_sf"/>
</dbReference>
<dbReference type="PANTHER" id="PTHR13018:SF24">
    <property type="entry name" value="CSC1-LIKE PROTEIN 1"/>
    <property type="match status" value="1"/>
</dbReference>
<dbReference type="PANTHER" id="PTHR13018">
    <property type="entry name" value="PROBABLE MEMBRANE PROTEIN DUF221-RELATED"/>
    <property type="match status" value="1"/>
</dbReference>
<dbReference type="Pfam" id="PF14703">
    <property type="entry name" value="PHM7_cyt"/>
    <property type="match status" value="1"/>
</dbReference>
<dbReference type="Pfam" id="PF02714">
    <property type="entry name" value="RSN1_7TM"/>
    <property type="match status" value="1"/>
</dbReference>
<dbReference type="Pfam" id="PF13967">
    <property type="entry name" value="RSN1_TM"/>
    <property type="match status" value="1"/>
</dbReference>
<dbReference type="SUPFAM" id="SSF54928">
    <property type="entry name" value="RNA-binding domain, RBD"/>
    <property type="match status" value="1"/>
</dbReference>